<name>FOXO1_XENTR</name>
<dbReference type="EMBL" id="BC080894">
    <property type="protein sequence ID" value="AAH80894.1"/>
    <property type="molecule type" value="mRNA"/>
</dbReference>
<dbReference type="RefSeq" id="NP_001008016.1">
    <property type="nucleotide sequence ID" value="NM_001008015.1"/>
</dbReference>
<dbReference type="RefSeq" id="XP_031751758.1">
    <property type="nucleotide sequence ID" value="XM_031895898.1"/>
</dbReference>
<dbReference type="SMR" id="Q66JJ0"/>
<dbReference type="FunCoup" id="Q66JJ0">
    <property type="interactions" value="2823"/>
</dbReference>
<dbReference type="STRING" id="8364.ENSXETP00000030298"/>
<dbReference type="DNASU" id="493378"/>
<dbReference type="GeneID" id="493378"/>
<dbReference type="KEGG" id="xtr:493378"/>
<dbReference type="AGR" id="Xenbase:XB-GENE-482528"/>
<dbReference type="CTD" id="2308"/>
<dbReference type="Xenbase" id="XB-GENE-482528">
    <property type="gene designation" value="foxo1"/>
</dbReference>
<dbReference type="InParanoid" id="Q66JJ0"/>
<dbReference type="OMA" id="SHTMQMN"/>
<dbReference type="OrthoDB" id="5954824at2759"/>
<dbReference type="Reactome" id="R-XTR-211163">
    <property type="pathway name" value="AKT-mediated inactivation of FOXO1A"/>
</dbReference>
<dbReference type="Reactome" id="R-XTR-9614399">
    <property type="pathway name" value="Regulation of localization of FOXO transcription factors"/>
</dbReference>
<dbReference type="Proteomes" id="UP000008143">
    <property type="component" value="Chromosome 2"/>
</dbReference>
<dbReference type="Bgee" id="ENSXETG00000036259">
    <property type="expression patterns" value="Expressed in liver and 12 other cell types or tissues"/>
</dbReference>
<dbReference type="GO" id="GO:0005737">
    <property type="term" value="C:cytoplasm"/>
    <property type="evidence" value="ECO:0000250"/>
    <property type="project" value="UniProtKB"/>
</dbReference>
<dbReference type="GO" id="GO:0005829">
    <property type="term" value="C:cytosol"/>
    <property type="evidence" value="ECO:0000250"/>
    <property type="project" value="UniProtKB"/>
</dbReference>
<dbReference type="GO" id="GO:0005739">
    <property type="term" value="C:mitochondrion"/>
    <property type="evidence" value="ECO:0000250"/>
    <property type="project" value="UniProtKB"/>
</dbReference>
<dbReference type="GO" id="GO:0005634">
    <property type="term" value="C:nucleus"/>
    <property type="evidence" value="ECO:0000250"/>
    <property type="project" value="UniProtKB"/>
</dbReference>
<dbReference type="GO" id="GO:0003682">
    <property type="term" value="F:chromatin binding"/>
    <property type="evidence" value="ECO:0000250"/>
    <property type="project" value="UniProtKB"/>
</dbReference>
<dbReference type="GO" id="GO:0001228">
    <property type="term" value="F:DNA-binding transcription activator activity, RNA polymerase II-specific"/>
    <property type="evidence" value="ECO:0000250"/>
    <property type="project" value="UniProtKB"/>
</dbReference>
<dbReference type="GO" id="GO:0043565">
    <property type="term" value="F:sequence-specific DNA binding"/>
    <property type="evidence" value="ECO:0000250"/>
    <property type="project" value="UniProtKB"/>
</dbReference>
<dbReference type="GO" id="GO:0070417">
    <property type="term" value="P:cellular response to cold"/>
    <property type="evidence" value="ECO:0000250"/>
    <property type="project" value="UniProtKB"/>
</dbReference>
<dbReference type="GO" id="GO:0071455">
    <property type="term" value="P:cellular response to hyperoxia"/>
    <property type="evidence" value="ECO:0000250"/>
    <property type="project" value="UniProtKB"/>
</dbReference>
<dbReference type="GO" id="GO:0009267">
    <property type="term" value="P:cellular response to starvation"/>
    <property type="evidence" value="ECO:0000250"/>
    <property type="project" value="UniProtKB"/>
</dbReference>
<dbReference type="GO" id="GO:0097009">
    <property type="term" value="P:energy homeostasis"/>
    <property type="evidence" value="ECO:0000250"/>
    <property type="project" value="UniProtKB"/>
</dbReference>
<dbReference type="GO" id="GO:0045444">
    <property type="term" value="P:fat cell differentiation"/>
    <property type="evidence" value="ECO:0000250"/>
    <property type="project" value="UniProtKB"/>
</dbReference>
<dbReference type="GO" id="GO:0001678">
    <property type="term" value="P:intracellular glucose homeostasis"/>
    <property type="evidence" value="ECO:0000250"/>
    <property type="project" value="UniProtKB"/>
</dbReference>
<dbReference type="GO" id="GO:0043066">
    <property type="term" value="P:negative regulation of apoptotic process"/>
    <property type="evidence" value="ECO:0000250"/>
    <property type="project" value="UniProtKB"/>
</dbReference>
<dbReference type="GO" id="GO:0045892">
    <property type="term" value="P:negative regulation of DNA-templated transcription"/>
    <property type="evidence" value="ECO:0000250"/>
    <property type="project" value="UniProtKB"/>
</dbReference>
<dbReference type="GO" id="GO:0046676">
    <property type="term" value="P:negative regulation of insulin secretion"/>
    <property type="evidence" value="ECO:0000250"/>
    <property type="project" value="UniProtKB"/>
</dbReference>
<dbReference type="GO" id="GO:0043065">
    <property type="term" value="P:positive regulation of apoptotic process"/>
    <property type="evidence" value="ECO:0000250"/>
    <property type="project" value="UniProtKB"/>
</dbReference>
<dbReference type="GO" id="GO:0010508">
    <property type="term" value="P:positive regulation of autophagy"/>
    <property type="evidence" value="ECO:0000250"/>
    <property type="project" value="UniProtKB"/>
</dbReference>
<dbReference type="GO" id="GO:0045893">
    <property type="term" value="P:positive regulation of DNA-templated transcription"/>
    <property type="evidence" value="ECO:0000250"/>
    <property type="project" value="UniProtKB"/>
</dbReference>
<dbReference type="GO" id="GO:0045722">
    <property type="term" value="P:positive regulation of gluconeogenesis"/>
    <property type="evidence" value="ECO:0000250"/>
    <property type="project" value="UniProtKB"/>
</dbReference>
<dbReference type="GO" id="GO:0045732">
    <property type="term" value="P:positive regulation of protein catabolic process"/>
    <property type="evidence" value="ECO:0000250"/>
    <property type="project" value="UniProtKB"/>
</dbReference>
<dbReference type="GO" id="GO:0045944">
    <property type="term" value="P:positive regulation of transcription by RNA polymerase II"/>
    <property type="evidence" value="ECO:0000250"/>
    <property type="project" value="UniProtKB"/>
</dbReference>
<dbReference type="GO" id="GO:0006473">
    <property type="term" value="P:protein acetylation"/>
    <property type="evidence" value="ECO:0000250"/>
    <property type="project" value="UniProtKB"/>
</dbReference>
<dbReference type="GO" id="GO:0070542">
    <property type="term" value="P:response to fatty acid"/>
    <property type="evidence" value="ECO:0000250"/>
    <property type="project" value="UniProtKB"/>
</dbReference>
<dbReference type="GO" id="GO:0001659">
    <property type="term" value="P:temperature homeostasis"/>
    <property type="evidence" value="ECO:0000250"/>
    <property type="project" value="UniProtKB"/>
</dbReference>
<dbReference type="CDD" id="cd20060">
    <property type="entry name" value="FH_FOXO1"/>
    <property type="match status" value="1"/>
</dbReference>
<dbReference type="FunFam" id="1.10.10.10:FF:000032">
    <property type="entry name" value="Forkhead box protein O4"/>
    <property type="match status" value="1"/>
</dbReference>
<dbReference type="Gene3D" id="1.10.10.10">
    <property type="entry name" value="Winged helix-like DNA-binding domain superfamily/Winged helix DNA-binding domain"/>
    <property type="match status" value="1"/>
</dbReference>
<dbReference type="InterPro" id="IPR047408">
    <property type="entry name" value="FH_FOXO1"/>
</dbReference>
<dbReference type="InterPro" id="IPR001766">
    <property type="entry name" value="Fork_head_dom"/>
</dbReference>
<dbReference type="InterPro" id="IPR032067">
    <property type="entry name" value="FOXO-TAD"/>
</dbReference>
<dbReference type="InterPro" id="IPR032068">
    <property type="entry name" value="FOXO_KIX-bd"/>
</dbReference>
<dbReference type="InterPro" id="IPR030456">
    <property type="entry name" value="TF_fork_head_CS_2"/>
</dbReference>
<dbReference type="InterPro" id="IPR036388">
    <property type="entry name" value="WH-like_DNA-bd_sf"/>
</dbReference>
<dbReference type="InterPro" id="IPR036390">
    <property type="entry name" value="WH_DNA-bd_sf"/>
</dbReference>
<dbReference type="PANTHER" id="PTHR45767">
    <property type="entry name" value="FORKHEAD BOX PROTEIN O"/>
    <property type="match status" value="1"/>
</dbReference>
<dbReference type="PANTHER" id="PTHR45767:SF1">
    <property type="entry name" value="FORKHEAD BOX PROTEIN O1"/>
    <property type="match status" value="1"/>
</dbReference>
<dbReference type="Pfam" id="PF00250">
    <property type="entry name" value="Forkhead"/>
    <property type="match status" value="1"/>
</dbReference>
<dbReference type="Pfam" id="PF16676">
    <property type="entry name" value="FOXO-TAD"/>
    <property type="match status" value="1"/>
</dbReference>
<dbReference type="Pfam" id="PF16675">
    <property type="entry name" value="FOXO_KIX_bdg"/>
    <property type="match status" value="1"/>
</dbReference>
<dbReference type="PRINTS" id="PR00053">
    <property type="entry name" value="FORKHEAD"/>
</dbReference>
<dbReference type="SMART" id="SM00339">
    <property type="entry name" value="FH"/>
    <property type="match status" value="1"/>
</dbReference>
<dbReference type="SUPFAM" id="SSF46785">
    <property type="entry name" value="Winged helix' DNA-binding domain"/>
    <property type="match status" value="1"/>
</dbReference>
<dbReference type="PROSITE" id="PS00658">
    <property type="entry name" value="FORK_HEAD_2"/>
    <property type="match status" value="1"/>
</dbReference>
<dbReference type="PROSITE" id="PS50039">
    <property type="entry name" value="FORK_HEAD_3"/>
    <property type="match status" value="1"/>
</dbReference>
<comment type="function">
    <text evidence="1 3">Transcription factor that regulates metabolic homeostasis in response to oxidative stress. Binds to the consensus sequence 5'-TT[G/A]TTTTG-3' and the related Daf-16 family binding element (DBE) with consensus sequence 5'-TT[G/A]TTTAC-3'. Main regulator of redox balance and osteoblast numbers and controls bone mass. Orchestrates the endocrine function of the skeleton in regulating glucose metabolism. Also acts as a key regulator of chondrogenic commitment of skeletal progenitor cells in response to lipid availability: when lipids levels are low, translocates to the nucleus and promotes expression of sox9, which induces chondrogenic commitment and suppresses fatty acid oxidation. Acts synergistically with atf4 to suppress osteocalcin/bglap activity, increasing glucose levels and triggering glucose intolerance and insulin insensitivity. Also suppresses the transcriptional activity of runx2, an upstream activator of osteocalcin/bglap. May act as a positive regulator of apoptosis in cardiac smooth muscle cells as a result of its transcriptional activation of pro-apoptotic genes (By similarity).</text>
</comment>
<comment type="subcellular location">
    <subcellularLocation>
        <location evidence="3">Cytoplasm</location>
    </subcellularLocation>
    <subcellularLocation>
        <location evidence="3">Nucleus</location>
    </subcellularLocation>
    <text evidence="3">Shuttles between the cytoplasm and nucleus.</text>
</comment>
<comment type="PTM">
    <text evidence="3">Phosphorylated by AKT1; insulin-induced.</text>
</comment>
<comment type="PTM">
    <text evidence="1">IGF1 rapidly induces phosphorylation of Thr-28, Ser-240 and Ser-303. Phosphorylation of Ser-240 decreases DNA-binding activity and promotes the phosphorylation of Thr-28, and Ser-303, which leads to nuclear exclusion and loss of function. Phosphorylation of Ser-313 is independent of IGF1 and leads to reduced function (By similarity).</text>
</comment>
<protein>
    <recommendedName>
        <fullName>Forkhead box protein O1</fullName>
        <shortName>FoxO1</shortName>
    </recommendedName>
    <alternativeName>
        <fullName>FoxO1A</fullName>
    </alternativeName>
</protein>
<accession>Q66JJ0</accession>
<evidence type="ECO:0000250" key="1">
    <source>
        <dbReference type="UniProtKB" id="Q12778"/>
    </source>
</evidence>
<evidence type="ECO:0000250" key="2">
    <source>
        <dbReference type="UniProtKB" id="Q6EUW2"/>
    </source>
</evidence>
<evidence type="ECO:0000250" key="3">
    <source>
        <dbReference type="UniProtKB" id="Q9R1E0"/>
    </source>
</evidence>
<evidence type="ECO:0000255" key="4">
    <source>
        <dbReference type="PROSITE-ProRule" id="PRU00089"/>
    </source>
</evidence>
<evidence type="ECO:0000256" key="5">
    <source>
        <dbReference type="SAM" id="MobiDB-lite"/>
    </source>
</evidence>
<evidence type="ECO:0000312" key="6">
    <source>
        <dbReference type="EMBL" id="AAH80894.1"/>
    </source>
</evidence>
<sequence>MAEAPLPPPPGVEVDPDFEPFSRPRSCTWPLPRPEFNPSSSANSSPAPSLQPEPAAGNVDFLSNLSLLEESEDFDPAEALGVCGDFPCQDIRQLQPPVPQQHPQQQAGTLCAPSVPSALSPASSPSPLGAQQPRKSSSSRRNAWGNLSYADLISQAIESSPEKRLTLSQIYDWMVKSVPYFKDKGDSNSSAGWKNSIRHNLSLHSKFVRVQNEGTGKSSWWILNPEGGKNGKSPRRRAASMDNNSKFAKSRGRAAKKKATMQSSQDGSSDSPGSQFSKWPGSPSSQSNDDFEAWSTFRPRTSSNASTISGRLSPIMPEQDDLGDADVHNLVYPPSATKLTSTLPSLSEMGNSENMENLLDNLNLLSPNTSTQSSPASMMQQSGYLFTSPNTSLGSPNSEYRKYSYAQTGMNPVSQMPMQTVPENKSGYRAVGQYPVPAGLLKELLTSDSPPHNDILTPVDSAVSQANSRVLAQNSLMAPSSVMPTYGSQPTHNKMSSHPHSHQPPPNHPSVNGRTMTHNSGINRLSTVKTSVQVPMPQPIQMTSMGSYPVNSCNGYGRVGIVSIHQEILPSDLDDMFIESLDCDMESIIRNDLMEDGEADFNFDSILPNQSFPHSVTTTTHSWVSG</sequence>
<gene>
    <name evidence="2" type="primary">foxo1</name>
    <name evidence="6" type="synonym">foxo1a</name>
</gene>
<reference evidence="6" key="1">
    <citation type="submission" date="2004-08" db="EMBL/GenBank/DDBJ databases">
        <authorList>
            <consortium name="NIH - Xenopus Gene Collection (XGC) project"/>
        </authorList>
    </citation>
    <scope>NUCLEOTIDE SEQUENCE [LARGE SCALE MRNA]</scope>
    <source>
        <tissue evidence="6">Tail bud</tissue>
    </source>
</reference>
<feature type="chain" id="PRO_0000270987" description="Forkhead box protein O1">
    <location>
        <begin position="1"/>
        <end position="626"/>
    </location>
</feature>
<feature type="DNA-binding region" description="Fork-head" evidence="4">
    <location>
        <begin position="144"/>
        <end position="238"/>
    </location>
</feature>
<feature type="region of interest" description="Disordered" evidence="5">
    <location>
        <begin position="1"/>
        <end position="57"/>
    </location>
</feature>
<feature type="region of interest" description="Disordered" evidence="5">
    <location>
        <begin position="90"/>
        <end position="142"/>
    </location>
</feature>
<feature type="region of interest" description="Disordered" evidence="5">
    <location>
        <begin position="218"/>
        <end position="319"/>
    </location>
</feature>
<feature type="region of interest" description="Disordered" evidence="5">
    <location>
        <begin position="484"/>
        <end position="519"/>
    </location>
</feature>
<feature type="compositionally biased region" description="Pro residues" evidence="5">
    <location>
        <begin position="1"/>
        <end position="11"/>
    </location>
</feature>
<feature type="compositionally biased region" description="Low complexity" evidence="5">
    <location>
        <begin position="37"/>
        <end position="48"/>
    </location>
</feature>
<feature type="compositionally biased region" description="Low complexity" evidence="5">
    <location>
        <begin position="101"/>
        <end position="133"/>
    </location>
</feature>
<feature type="compositionally biased region" description="Basic residues" evidence="5">
    <location>
        <begin position="248"/>
        <end position="259"/>
    </location>
</feature>
<feature type="compositionally biased region" description="Low complexity" evidence="5">
    <location>
        <begin position="262"/>
        <end position="277"/>
    </location>
</feature>
<feature type="compositionally biased region" description="Polar residues" evidence="5">
    <location>
        <begin position="298"/>
        <end position="310"/>
    </location>
</feature>
<feature type="compositionally biased region" description="Polar residues" evidence="5">
    <location>
        <begin position="484"/>
        <end position="494"/>
    </location>
</feature>
<organism>
    <name type="scientific">Xenopus tropicalis</name>
    <name type="common">Western clawed frog</name>
    <name type="synonym">Silurana tropicalis</name>
    <dbReference type="NCBI Taxonomy" id="8364"/>
    <lineage>
        <taxon>Eukaryota</taxon>
        <taxon>Metazoa</taxon>
        <taxon>Chordata</taxon>
        <taxon>Craniata</taxon>
        <taxon>Vertebrata</taxon>
        <taxon>Euteleostomi</taxon>
        <taxon>Amphibia</taxon>
        <taxon>Batrachia</taxon>
        <taxon>Anura</taxon>
        <taxon>Pipoidea</taxon>
        <taxon>Pipidae</taxon>
        <taxon>Xenopodinae</taxon>
        <taxon>Xenopus</taxon>
        <taxon>Silurana</taxon>
    </lineage>
</organism>
<keyword id="KW-0963">Cytoplasm</keyword>
<keyword id="KW-0238">DNA-binding</keyword>
<keyword id="KW-0539">Nucleus</keyword>
<keyword id="KW-0597">Phosphoprotein</keyword>
<keyword id="KW-1185">Reference proteome</keyword>
<keyword id="KW-0804">Transcription</keyword>
<keyword id="KW-0805">Transcription regulation</keyword>
<proteinExistence type="evidence at transcript level"/>